<comment type="function">
    <text evidence="2">Involved in the pyrimidine salvage pathway. The uracil phosphoribosyltransferase (UPRT) activity, that catalyzes the conversion of uracil and 5-phospho-alpha-D-ribose 1-diphosphate (PRPP) to UMP and diphosphate, is unsure.</text>
</comment>
<comment type="catalytic activity">
    <reaction>
        <text>UMP + diphosphate = 5-phospho-alpha-D-ribose 1-diphosphate + uracil</text>
        <dbReference type="Rhea" id="RHEA:13017"/>
        <dbReference type="ChEBI" id="CHEBI:17568"/>
        <dbReference type="ChEBI" id="CHEBI:33019"/>
        <dbReference type="ChEBI" id="CHEBI:57865"/>
        <dbReference type="ChEBI" id="CHEBI:58017"/>
        <dbReference type="EC" id="2.4.2.9"/>
    </reaction>
</comment>
<comment type="catalytic activity">
    <reaction>
        <text>cytidine + ATP = CMP + ADP + H(+)</text>
        <dbReference type="Rhea" id="RHEA:24674"/>
        <dbReference type="ChEBI" id="CHEBI:15378"/>
        <dbReference type="ChEBI" id="CHEBI:17562"/>
        <dbReference type="ChEBI" id="CHEBI:30616"/>
        <dbReference type="ChEBI" id="CHEBI:60377"/>
        <dbReference type="ChEBI" id="CHEBI:456216"/>
        <dbReference type="EC" id="2.7.1.48"/>
    </reaction>
</comment>
<comment type="catalytic activity">
    <reaction>
        <text>uridine + ATP = UMP + ADP + H(+)</text>
        <dbReference type="Rhea" id="RHEA:16825"/>
        <dbReference type="ChEBI" id="CHEBI:15378"/>
        <dbReference type="ChEBI" id="CHEBI:16704"/>
        <dbReference type="ChEBI" id="CHEBI:30616"/>
        <dbReference type="ChEBI" id="CHEBI:57865"/>
        <dbReference type="ChEBI" id="CHEBI:456216"/>
        <dbReference type="EC" id="2.7.1.48"/>
    </reaction>
</comment>
<comment type="cofactor">
    <cofactor evidence="1">
        <name>Mg(2+)</name>
        <dbReference type="ChEBI" id="CHEBI:18420"/>
    </cofactor>
    <text evidence="1">Binds 1 Mg(2+) ion per subunit. The magnesium is bound as Mg-PRPP.</text>
</comment>
<comment type="activity regulation">
    <text evidence="1">Allosterically activated by GTP.</text>
</comment>
<comment type="pathway">
    <text>Pyrimidine metabolism; UMP biosynthesis via salvage pathway; UMP from uracil: step 1/1.</text>
</comment>
<comment type="pathway">
    <text>Pyrimidine metabolism; CTP biosynthesis via salvage pathway; CTP from cytidine: step 1/3.</text>
</comment>
<comment type="pathway">
    <text>Pyrimidine metabolism; UMP biosynthesis via salvage pathway; UMP from uridine: step 1/1.</text>
</comment>
<comment type="similarity">
    <text evidence="3">In the N-terminal section; belongs to the uridine kinase family.</text>
</comment>
<comment type="similarity">
    <text evidence="3">In the C-terminal section; belongs to the UPRTase family.</text>
</comment>
<comment type="sequence caution" evidence="3">
    <conflict type="erroneous gene model prediction">
        <sequence resource="EMBL-CDS" id="CAA18219"/>
    </conflict>
</comment>
<comment type="sequence caution" evidence="3">
    <conflict type="erroneous gene model prediction">
        <sequence resource="EMBL-CDS" id="CAB79506"/>
    </conflict>
</comment>
<keyword id="KW-0021">Allosteric enzyme</keyword>
<keyword id="KW-0328">Glycosyltransferase</keyword>
<keyword id="KW-0342">GTP-binding</keyword>
<keyword id="KW-0418">Kinase</keyword>
<keyword id="KW-0511">Multifunctional enzyme</keyword>
<keyword id="KW-0547">Nucleotide-binding</keyword>
<keyword id="KW-1185">Reference proteome</keyword>
<keyword id="KW-0808">Transferase</keyword>
<feature type="chain" id="PRO_0000120784" description="Uridine kinase-like protein 4">
    <location>
        <begin position="1"/>
        <end position="469"/>
    </location>
</feature>
<feature type="region of interest" description="Uridine kinase" evidence="1">
    <location>
        <begin position="46"/>
        <end position="249"/>
    </location>
</feature>
<feature type="region of interest" description="Uracil phosphoribosyltransferase" evidence="1">
    <location>
        <begin position="259"/>
        <end position="469"/>
    </location>
</feature>
<feature type="binding site" evidence="1">
    <location>
        <position position="283"/>
    </location>
    <ligand>
        <name>GTP</name>
        <dbReference type="ChEBI" id="CHEBI:37565"/>
    </ligand>
</feature>
<feature type="binding site" evidence="1">
    <location>
        <position position="292"/>
    </location>
    <ligand>
        <name>GTP</name>
        <dbReference type="ChEBI" id="CHEBI:37565"/>
    </ligand>
</feature>
<feature type="binding site" evidence="1">
    <location>
        <begin position="326"/>
        <end position="329"/>
    </location>
    <ligand>
        <name>GTP</name>
        <dbReference type="ChEBI" id="CHEBI:37565"/>
    </ligand>
</feature>
<feature type="binding site" evidence="1">
    <location>
        <position position="336"/>
    </location>
    <ligand>
        <name>5-phospho-alpha-D-ribose 1-diphosphate</name>
        <dbReference type="ChEBI" id="CHEBI:58017"/>
    </ligand>
</feature>
<feature type="binding site" evidence="1">
    <location>
        <position position="361"/>
    </location>
    <ligand>
        <name>5-phospho-alpha-D-ribose 1-diphosphate</name>
        <dbReference type="ChEBI" id="CHEBI:58017"/>
    </ligand>
</feature>
<feature type="binding site" evidence="1">
    <location>
        <position position="381"/>
    </location>
    <ligand>
        <name>GTP</name>
        <dbReference type="ChEBI" id="CHEBI:37565"/>
    </ligand>
</feature>
<feature type="binding site" evidence="1">
    <location>
        <position position="387"/>
    </location>
    <ligand>
        <name>5-phospho-alpha-D-ribose 1-diphosphate</name>
        <dbReference type="ChEBI" id="CHEBI:58017"/>
    </ligand>
</feature>
<feature type="binding site" evidence="1">
    <location>
        <begin position="392"/>
        <end position="395"/>
    </location>
    <ligand>
        <name>5-phospho-alpha-D-ribose 1-diphosphate</name>
        <dbReference type="ChEBI" id="CHEBI:58017"/>
    </ligand>
</feature>
<feature type="binding site" evidence="1">
    <location>
        <begin position="457"/>
        <end position="459"/>
    </location>
    <ligand>
        <name>uracil</name>
        <dbReference type="ChEBI" id="CHEBI:17568"/>
    </ligand>
</feature>
<feature type="binding site" evidence="1">
    <location>
        <position position="458"/>
    </location>
    <ligand>
        <name>5-phospho-alpha-D-ribose 1-diphosphate</name>
        <dbReference type="ChEBI" id="CHEBI:58017"/>
    </ligand>
</feature>
<feature type="sequence conflict" description="In Ref. 5; BAF00520." evidence="3" ref="5">
    <original>E</original>
    <variation>G</variation>
    <location>
        <position position="94"/>
    </location>
</feature>
<proteinExistence type="evidence at transcript level"/>
<protein>
    <recommendedName>
        <fullName>Uridine kinase-like protein 4</fullName>
    </recommendedName>
    <domain>
        <recommendedName>
            <fullName>Uridine kinase</fullName>
            <shortName>UK</shortName>
            <ecNumber>2.7.1.48</ecNumber>
        </recommendedName>
    </domain>
    <domain>
        <recommendedName>
            <fullName>Putative uracil phosphoribosyltransferase</fullName>
            <shortName>UPRTase</shortName>
            <ecNumber>2.4.2.9</ecNumber>
        </recommendedName>
        <alternativeName>
            <fullName>UMP pyrophosphorylase</fullName>
        </alternativeName>
    </domain>
</protein>
<organism>
    <name type="scientific">Arabidopsis thaliana</name>
    <name type="common">Mouse-ear cress</name>
    <dbReference type="NCBI Taxonomy" id="3702"/>
    <lineage>
        <taxon>Eukaryota</taxon>
        <taxon>Viridiplantae</taxon>
        <taxon>Streptophyta</taxon>
        <taxon>Embryophyta</taxon>
        <taxon>Tracheophyta</taxon>
        <taxon>Spermatophyta</taxon>
        <taxon>Magnoliopsida</taxon>
        <taxon>eudicotyledons</taxon>
        <taxon>Gunneridae</taxon>
        <taxon>Pentapetalae</taxon>
        <taxon>rosids</taxon>
        <taxon>malvids</taxon>
        <taxon>Brassicales</taxon>
        <taxon>Brassicaceae</taxon>
        <taxon>Camelineae</taxon>
        <taxon>Arabidopsis</taxon>
    </lineage>
</organism>
<accession>O65583</accession>
<accession>Q0WQS9</accession>
<accession>Q8LD95</accession>
<accession>Q9SYU2</accession>
<dbReference type="EC" id="2.7.1.48"/>
<dbReference type="EC" id="2.4.2.9"/>
<dbReference type="EMBL" id="AL022223">
    <property type="protein sequence ID" value="CAA18219.1"/>
    <property type="status" value="ALT_SEQ"/>
    <property type="molecule type" value="Genomic_DNA"/>
</dbReference>
<dbReference type="EMBL" id="AL161565">
    <property type="protein sequence ID" value="CAB79506.1"/>
    <property type="status" value="ALT_SEQ"/>
    <property type="molecule type" value="Genomic_DNA"/>
</dbReference>
<dbReference type="EMBL" id="CP002687">
    <property type="protein sequence ID" value="AEE85211.1"/>
    <property type="molecule type" value="Genomic_DNA"/>
</dbReference>
<dbReference type="EMBL" id="CP002687">
    <property type="protein sequence ID" value="AEE85212.1"/>
    <property type="molecule type" value="Genomic_DNA"/>
</dbReference>
<dbReference type="EMBL" id="CP002687">
    <property type="protein sequence ID" value="ANM66905.1"/>
    <property type="molecule type" value="Genomic_DNA"/>
</dbReference>
<dbReference type="EMBL" id="CP002687">
    <property type="protein sequence ID" value="ANM66906.1"/>
    <property type="molecule type" value="Genomic_DNA"/>
</dbReference>
<dbReference type="EMBL" id="AY086133">
    <property type="protein sequence ID" value="AAM63338.1"/>
    <property type="molecule type" value="mRNA"/>
</dbReference>
<dbReference type="EMBL" id="BT022059">
    <property type="protein sequence ID" value="AAY25471.1"/>
    <property type="molecule type" value="mRNA"/>
</dbReference>
<dbReference type="EMBL" id="AK228608">
    <property type="protein sequence ID" value="BAF00520.1"/>
    <property type="molecule type" value="mRNA"/>
</dbReference>
<dbReference type="EMBL" id="AF116860">
    <property type="protein sequence ID" value="AAD28199.1"/>
    <property type="molecule type" value="mRNA"/>
</dbReference>
<dbReference type="PIR" id="T05053">
    <property type="entry name" value="T05053"/>
</dbReference>
<dbReference type="RefSeq" id="NP_001320072.1">
    <property type="nucleotide sequence ID" value="NM_001341804.1"/>
</dbReference>
<dbReference type="RefSeq" id="NP_001328772.1">
    <property type="nucleotide sequence ID" value="NM_001341805.1"/>
</dbReference>
<dbReference type="RefSeq" id="NP_567747.4">
    <property type="nucleotide sequence ID" value="NM_118784.6"/>
</dbReference>
<dbReference type="RefSeq" id="NP_849448.4">
    <property type="nucleotide sequence ID" value="NM_179117.5"/>
</dbReference>
<dbReference type="SMR" id="O65583"/>
<dbReference type="FunCoup" id="O65583">
    <property type="interactions" value="3871"/>
</dbReference>
<dbReference type="STRING" id="3702.O65583"/>
<dbReference type="iPTMnet" id="O65583"/>
<dbReference type="PaxDb" id="3702-AT4G26510.1"/>
<dbReference type="ProteomicsDB" id="245305"/>
<dbReference type="EnsemblPlants" id="AT4G26510.1">
    <property type="protein sequence ID" value="AT4G26510.1"/>
    <property type="gene ID" value="AT4G26510"/>
</dbReference>
<dbReference type="EnsemblPlants" id="AT4G26510.2">
    <property type="protein sequence ID" value="AT4G26510.2"/>
    <property type="gene ID" value="AT4G26510"/>
</dbReference>
<dbReference type="EnsemblPlants" id="AT4G26510.3">
    <property type="protein sequence ID" value="AT4G26510.3"/>
    <property type="gene ID" value="AT4G26510"/>
</dbReference>
<dbReference type="EnsemblPlants" id="AT4G26510.4">
    <property type="protein sequence ID" value="AT4G26510.4"/>
    <property type="gene ID" value="AT4G26510"/>
</dbReference>
<dbReference type="GeneID" id="828757"/>
<dbReference type="Gramene" id="AT4G26510.1">
    <property type="protein sequence ID" value="AT4G26510.1"/>
    <property type="gene ID" value="AT4G26510"/>
</dbReference>
<dbReference type="Gramene" id="AT4G26510.2">
    <property type="protein sequence ID" value="AT4G26510.2"/>
    <property type="gene ID" value="AT4G26510"/>
</dbReference>
<dbReference type="Gramene" id="AT4G26510.3">
    <property type="protein sequence ID" value="AT4G26510.3"/>
    <property type="gene ID" value="AT4G26510"/>
</dbReference>
<dbReference type="Gramene" id="AT4G26510.4">
    <property type="protein sequence ID" value="AT4G26510.4"/>
    <property type="gene ID" value="AT4G26510"/>
</dbReference>
<dbReference type="KEGG" id="ath:AT4G26510"/>
<dbReference type="Araport" id="AT4G26510"/>
<dbReference type="TAIR" id="AT4G26510">
    <property type="gene designation" value="UKL4"/>
</dbReference>
<dbReference type="eggNOG" id="KOG4203">
    <property type="taxonomic scope" value="Eukaryota"/>
</dbReference>
<dbReference type="HOGENOM" id="CLU_021278_0_3_1"/>
<dbReference type="InParanoid" id="O65583"/>
<dbReference type="OMA" id="MMSPATE"/>
<dbReference type="OrthoDB" id="106623at2759"/>
<dbReference type="PhylomeDB" id="O65583"/>
<dbReference type="BioCyc" id="ARA:AT4G26510-MONOMER"/>
<dbReference type="UniPathway" id="UPA00574">
    <property type="reaction ID" value="UER00636"/>
</dbReference>
<dbReference type="UniPathway" id="UPA00574">
    <property type="reaction ID" value="UER00637"/>
</dbReference>
<dbReference type="UniPathway" id="UPA00579">
    <property type="reaction ID" value="UER00640"/>
</dbReference>
<dbReference type="PRO" id="PR:O65583"/>
<dbReference type="Proteomes" id="UP000006548">
    <property type="component" value="Chromosome 4"/>
</dbReference>
<dbReference type="ExpressionAtlas" id="O65583">
    <property type="expression patterns" value="baseline and differential"/>
</dbReference>
<dbReference type="GO" id="GO:0005524">
    <property type="term" value="F:ATP binding"/>
    <property type="evidence" value="ECO:0007669"/>
    <property type="project" value="InterPro"/>
</dbReference>
<dbReference type="GO" id="GO:0043771">
    <property type="term" value="F:cytidine kinase activity"/>
    <property type="evidence" value="ECO:0007669"/>
    <property type="project" value="RHEA"/>
</dbReference>
<dbReference type="GO" id="GO:0005525">
    <property type="term" value="F:GTP binding"/>
    <property type="evidence" value="ECO:0007669"/>
    <property type="project" value="UniProtKB-KW"/>
</dbReference>
<dbReference type="GO" id="GO:0004845">
    <property type="term" value="F:uracil phosphoribosyltransferase activity"/>
    <property type="evidence" value="ECO:0007669"/>
    <property type="project" value="UniProtKB-EC"/>
</dbReference>
<dbReference type="GO" id="GO:0004849">
    <property type="term" value="F:uridine kinase activity"/>
    <property type="evidence" value="ECO:0007669"/>
    <property type="project" value="UniProtKB-EC"/>
</dbReference>
<dbReference type="GO" id="GO:0044211">
    <property type="term" value="P:CTP salvage"/>
    <property type="evidence" value="ECO:0007669"/>
    <property type="project" value="UniProtKB-UniPathway"/>
</dbReference>
<dbReference type="GO" id="GO:0044206">
    <property type="term" value="P:UMP salvage"/>
    <property type="evidence" value="ECO:0007669"/>
    <property type="project" value="UniProtKB-UniPathway"/>
</dbReference>
<dbReference type="CDD" id="cd06223">
    <property type="entry name" value="PRTases_typeI"/>
    <property type="match status" value="1"/>
</dbReference>
<dbReference type="CDD" id="cd02023">
    <property type="entry name" value="UMPK"/>
    <property type="match status" value="1"/>
</dbReference>
<dbReference type="FunFam" id="3.40.50.2020:FF:000015">
    <property type="entry name" value="Uridine kinase"/>
    <property type="match status" value="1"/>
</dbReference>
<dbReference type="FunFam" id="3.40.50.300:FF:000339">
    <property type="entry name" value="Uridine kinase"/>
    <property type="match status" value="1"/>
</dbReference>
<dbReference type="Gene3D" id="3.40.50.2020">
    <property type="match status" value="1"/>
</dbReference>
<dbReference type="Gene3D" id="3.40.50.300">
    <property type="entry name" value="P-loop containing nucleotide triphosphate hydrolases"/>
    <property type="match status" value="1"/>
</dbReference>
<dbReference type="InterPro" id="IPR027417">
    <property type="entry name" value="P-loop_NTPase"/>
</dbReference>
<dbReference type="InterPro" id="IPR000836">
    <property type="entry name" value="PRibTrfase_dom"/>
</dbReference>
<dbReference type="InterPro" id="IPR006083">
    <property type="entry name" value="PRK/URK"/>
</dbReference>
<dbReference type="InterPro" id="IPR029057">
    <property type="entry name" value="PRTase-like"/>
</dbReference>
<dbReference type="InterPro" id="IPR000764">
    <property type="entry name" value="Uridine_kinase-like"/>
</dbReference>
<dbReference type="NCBIfam" id="NF001097">
    <property type="entry name" value="PRK00129.1"/>
    <property type="match status" value="1"/>
</dbReference>
<dbReference type="NCBIfam" id="NF004018">
    <property type="entry name" value="PRK05480.1"/>
    <property type="match status" value="1"/>
</dbReference>
<dbReference type="NCBIfam" id="TIGR00235">
    <property type="entry name" value="udk"/>
    <property type="match status" value="1"/>
</dbReference>
<dbReference type="PANTHER" id="PTHR10285">
    <property type="entry name" value="URIDINE KINASE"/>
    <property type="match status" value="1"/>
</dbReference>
<dbReference type="Pfam" id="PF00485">
    <property type="entry name" value="PRK"/>
    <property type="match status" value="1"/>
</dbReference>
<dbReference type="Pfam" id="PF14681">
    <property type="entry name" value="UPRTase"/>
    <property type="match status" value="1"/>
</dbReference>
<dbReference type="PRINTS" id="PR00988">
    <property type="entry name" value="URIDINKINASE"/>
</dbReference>
<dbReference type="SUPFAM" id="SSF52540">
    <property type="entry name" value="P-loop containing nucleoside triphosphate hydrolases"/>
    <property type="match status" value="1"/>
</dbReference>
<dbReference type="SUPFAM" id="SSF53271">
    <property type="entry name" value="PRTase-like"/>
    <property type="match status" value="1"/>
</dbReference>
<reference key="1">
    <citation type="journal article" date="1999" name="Nature">
        <title>Sequence and analysis of chromosome 4 of the plant Arabidopsis thaliana.</title>
        <authorList>
            <person name="Mayer K.F.X."/>
            <person name="Schueller C."/>
            <person name="Wambutt R."/>
            <person name="Murphy G."/>
            <person name="Volckaert G."/>
            <person name="Pohl T."/>
            <person name="Duesterhoeft A."/>
            <person name="Stiekema W."/>
            <person name="Entian K.-D."/>
            <person name="Terryn N."/>
            <person name="Harris B."/>
            <person name="Ansorge W."/>
            <person name="Brandt P."/>
            <person name="Grivell L.A."/>
            <person name="Rieger M."/>
            <person name="Weichselgartner M."/>
            <person name="de Simone V."/>
            <person name="Obermaier B."/>
            <person name="Mache R."/>
            <person name="Mueller M."/>
            <person name="Kreis M."/>
            <person name="Delseny M."/>
            <person name="Puigdomenech P."/>
            <person name="Watson M."/>
            <person name="Schmidtheini T."/>
            <person name="Reichert B."/>
            <person name="Portetelle D."/>
            <person name="Perez-Alonso M."/>
            <person name="Boutry M."/>
            <person name="Bancroft I."/>
            <person name="Vos P."/>
            <person name="Hoheisel J."/>
            <person name="Zimmermann W."/>
            <person name="Wedler H."/>
            <person name="Ridley P."/>
            <person name="Langham S.-A."/>
            <person name="McCullagh B."/>
            <person name="Bilham L."/>
            <person name="Robben J."/>
            <person name="van der Schueren J."/>
            <person name="Grymonprez B."/>
            <person name="Chuang Y.-J."/>
            <person name="Vandenbussche F."/>
            <person name="Braeken M."/>
            <person name="Weltjens I."/>
            <person name="Voet M."/>
            <person name="Bastiaens I."/>
            <person name="Aert R."/>
            <person name="Defoor E."/>
            <person name="Weitzenegger T."/>
            <person name="Bothe G."/>
            <person name="Ramsperger U."/>
            <person name="Hilbert H."/>
            <person name="Braun M."/>
            <person name="Holzer E."/>
            <person name="Brandt A."/>
            <person name="Peters S."/>
            <person name="van Staveren M."/>
            <person name="Dirkse W."/>
            <person name="Mooijman P."/>
            <person name="Klein Lankhorst R."/>
            <person name="Rose M."/>
            <person name="Hauf J."/>
            <person name="Koetter P."/>
            <person name="Berneiser S."/>
            <person name="Hempel S."/>
            <person name="Feldpausch M."/>
            <person name="Lamberth S."/>
            <person name="Van den Daele H."/>
            <person name="De Keyser A."/>
            <person name="Buysshaert C."/>
            <person name="Gielen J."/>
            <person name="Villarroel R."/>
            <person name="De Clercq R."/>
            <person name="van Montagu M."/>
            <person name="Rogers J."/>
            <person name="Cronin A."/>
            <person name="Quail M.A."/>
            <person name="Bray-Allen S."/>
            <person name="Clark L."/>
            <person name="Doggett J."/>
            <person name="Hall S."/>
            <person name="Kay M."/>
            <person name="Lennard N."/>
            <person name="McLay K."/>
            <person name="Mayes R."/>
            <person name="Pettett A."/>
            <person name="Rajandream M.A."/>
            <person name="Lyne M."/>
            <person name="Benes V."/>
            <person name="Rechmann S."/>
            <person name="Borkova D."/>
            <person name="Bloecker H."/>
            <person name="Scharfe M."/>
            <person name="Grimm M."/>
            <person name="Loehnert T.-H."/>
            <person name="Dose S."/>
            <person name="de Haan M."/>
            <person name="Maarse A.C."/>
            <person name="Schaefer M."/>
            <person name="Mueller-Auer S."/>
            <person name="Gabel C."/>
            <person name="Fuchs M."/>
            <person name="Fartmann B."/>
            <person name="Granderath K."/>
            <person name="Dauner D."/>
            <person name="Herzl A."/>
            <person name="Neumann S."/>
            <person name="Argiriou A."/>
            <person name="Vitale D."/>
            <person name="Liguori R."/>
            <person name="Piravandi E."/>
            <person name="Massenet O."/>
            <person name="Quigley F."/>
            <person name="Clabauld G."/>
            <person name="Muendlein A."/>
            <person name="Felber R."/>
            <person name="Schnabl S."/>
            <person name="Hiller R."/>
            <person name="Schmidt W."/>
            <person name="Lecharny A."/>
            <person name="Aubourg S."/>
            <person name="Chefdor F."/>
            <person name="Cooke R."/>
            <person name="Berger C."/>
            <person name="Monfort A."/>
            <person name="Casacuberta E."/>
            <person name="Gibbons T."/>
            <person name="Weber N."/>
            <person name="Vandenbol M."/>
            <person name="Bargues M."/>
            <person name="Terol J."/>
            <person name="Torres A."/>
            <person name="Perez-Perez A."/>
            <person name="Purnelle B."/>
            <person name="Bent E."/>
            <person name="Johnson S."/>
            <person name="Tacon D."/>
            <person name="Jesse T."/>
            <person name="Heijnen L."/>
            <person name="Schwarz S."/>
            <person name="Scholler P."/>
            <person name="Heber S."/>
            <person name="Francs P."/>
            <person name="Bielke C."/>
            <person name="Frishman D."/>
            <person name="Haase D."/>
            <person name="Lemcke K."/>
            <person name="Mewes H.-W."/>
            <person name="Stocker S."/>
            <person name="Zaccaria P."/>
            <person name="Bevan M."/>
            <person name="Wilson R.K."/>
            <person name="de la Bastide M."/>
            <person name="Habermann K."/>
            <person name="Parnell L."/>
            <person name="Dedhia N."/>
            <person name="Gnoj L."/>
            <person name="Schutz K."/>
            <person name="Huang E."/>
            <person name="Spiegel L."/>
            <person name="Sekhon M."/>
            <person name="Murray J."/>
            <person name="Sheet P."/>
            <person name="Cordes M."/>
            <person name="Abu-Threideh J."/>
            <person name="Stoneking T."/>
            <person name="Kalicki J."/>
            <person name="Graves T."/>
            <person name="Harmon G."/>
            <person name="Edwards J."/>
            <person name="Latreille P."/>
            <person name="Courtney L."/>
            <person name="Cloud J."/>
            <person name="Abbott A."/>
            <person name="Scott K."/>
            <person name="Johnson D."/>
            <person name="Minx P."/>
            <person name="Bentley D."/>
            <person name="Fulton B."/>
            <person name="Miller N."/>
            <person name="Greco T."/>
            <person name="Kemp K."/>
            <person name="Kramer J."/>
            <person name="Fulton L."/>
            <person name="Mardis E."/>
            <person name="Dante M."/>
            <person name="Pepin K."/>
            <person name="Hillier L.W."/>
            <person name="Nelson J."/>
            <person name="Spieth J."/>
            <person name="Ryan E."/>
            <person name="Andrews S."/>
            <person name="Geisel C."/>
            <person name="Layman D."/>
            <person name="Du H."/>
            <person name="Ali J."/>
            <person name="Berghoff A."/>
            <person name="Jones K."/>
            <person name="Drone K."/>
            <person name="Cotton M."/>
            <person name="Joshu C."/>
            <person name="Antonoiu B."/>
            <person name="Zidanic M."/>
            <person name="Strong C."/>
            <person name="Sun H."/>
            <person name="Lamar B."/>
            <person name="Yordan C."/>
            <person name="Ma P."/>
            <person name="Zhong J."/>
            <person name="Preston R."/>
            <person name="Vil D."/>
            <person name="Shekher M."/>
            <person name="Matero A."/>
            <person name="Shah R."/>
            <person name="Swaby I.K."/>
            <person name="O'Shaughnessy A."/>
            <person name="Rodriguez M."/>
            <person name="Hoffman J."/>
            <person name="Till S."/>
            <person name="Granat S."/>
            <person name="Shohdy N."/>
            <person name="Hasegawa A."/>
            <person name="Hameed A."/>
            <person name="Lodhi M."/>
            <person name="Johnson A."/>
            <person name="Chen E."/>
            <person name="Marra M.A."/>
            <person name="Martienssen R."/>
            <person name="McCombie W.R."/>
        </authorList>
    </citation>
    <scope>NUCLEOTIDE SEQUENCE [LARGE SCALE GENOMIC DNA]</scope>
    <source>
        <strain>cv. Columbia</strain>
    </source>
</reference>
<reference key="2">
    <citation type="journal article" date="2017" name="Plant J.">
        <title>Araport11: a complete reannotation of the Arabidopsis thaliana reference genome.</title>
        <authorList>
            <person name="Cheng C.Y."/>
            <person name="Krishnakumar V."/>
            <person name="Chan A.P."/>
            <person name="Thibaud-Nissen F."/>
            <person name="Schobel S."/>
            <person name="Town C.D."/>
        </authorList>
    </citation>
    <scope>GENOME REANNOTATION</scope>
    <source>
        <strain>cv. Columbia</strain>
    </source>
</reference>
<reference key="3">
    <citation type="submission" date="2002-03" db="EMBL/GenBank/DDBJ databases">
        <title>Full-length cDNA from Arabidopsis thaliana.</title>
        <authorList>
            <person name="Brover V.V."/>
            <person name="Troukhan M.E."/>
            <person name="Alexandrov N.A."/>
            <person name="Lu Y.-P."/>
            <person name="Flavell R.B."/>
            <person name="Feldmann K.A."/>
        </authorList>
    </citation>
    <scope>NUCLEOTIDE SEQUENCE [LARGE SCALE MRNA]</scope>
</reference>
<reference key="4">
    <citation type="submission" date="2005-05" db="EMBL/GenBank/DDBJ databases">
        <title>Arabidopsis ORF clones.</title>
        <authorList>
            <person name="Kim C.J."/>
            <person name="Chen H."/>
            <person name="Cheuk R."/>
            <person name="Shinn P."/>
            <person name="Ecker J.R."/>
        </authorList>
    </citation>
    <scope>NUCLEOTIDE SEQUENCE [LARGE SCALE MRNA]</scope>
</reference>
<reference key="5">
    <citation type="submission" date="2006-07" db="EMBL/GenBank/DDBJ databases">
        <title>Large-scale analysis of RIKEN Arabidopsis full-length (RAFL) cDNAs.</title>
        <authorList>
            <person name="Totoki Y."/>
            <person name="Seki M."/>
            <person name="Ishida J."/>
            <person name="Nakajima M."/>
            <person name="Enju A."/>
            <person name="Kamiya A."/>
            <person name="Narusaka M."/>
            <person name="Shin-i T."/>
            <person name="Nakagawa M."/>
            <person name="Sakamoto N."/>
            <person name="Oishi K."/>
            <person name="Kohara Y."/>
            <person name="Kobayashi M."/>
            <person name="Toyoda A."/>
            <person name="Sakaki Y."/>
            <person name="Sakurai T."/>
            <person name="Iida K."/>
            <person name="Akiyama K."/>
            <person name="Satou M."/>
            <person name="Toyoda T."/>
            <person name="Konagaya A."/>
            <person name="Carninci P."/>
            <person name="Kawai J."/>
            <person name="Hayashizaki Y."/>
            <person name="Shinozaki K."/>
        </authorList>
    </citation>
    <scope>NUCLEOTIDE SEQUENCE [LARGE SCALE MRNA]</scope>
    <source>
        <strain>cv. Columbia</strain>
    </source>
</reference>
<reference key="6">
    <citation type="online journal article" date="1999" name="Plant Gene Register">
        <title>Characterization of the cDNA and gene for an Arabidopsis thaliana uracil phosphoribosyltransferase.</title>
        <authorList>
            <person name="Weers B.D."/>
            <person name="Thornburg R.W."/>
        </authorList>
        <locator>PGR99-044</locator>
    </citation>
    <scope>NUCLEOTIDE SEQUENCE [MRNA] OF 297-469</scope>
    <source>
        <strain>cv. Columbia</strain>
    </source>
</reference>
<reference key="7">
    <citation type="journal article" date="2009" name="Plant J.">
        <title>Uracil salvage is necessary for early Arabidopsis development.</title>
        <authorList>
            <person name="Mainguet S.E."/>
            <person name="Gakiere B."/>
            <person name="Majira A."/>
            <person name="Pelletier S."/>
            <person name="Bringel F."/>
            <person name="Guerard F."/>
            <person name="Caboche M."/>
            <person name="Berthome R."/>
            <person name="Renou J.P."/>
        </authorList>
    </citation>
    <scope>FUNCTION</scope>
    <scope>GENE FAMILY</scope>
    <scope>NOMENCLATURE</scope>
</reference>
<evidence type="ECO:0000250" key="1"/>
<evidence type="ECO:0000269" key="2">
    <source>
    </source>
</evidence>
<evidence type="ECO:0000305" key="3"/>
<sequence>MGSKSVVDMIEAASRAHFSGLHVNGHMNGLEPSALKETTSASEDIQRQPFVIGVAGGAASGKTTVCDMIIQQLHDQRVVLINLDSFYHNLTEEELARVHEYNFDHPDAFDTEHLLSCMEKLRQGQAVDIPKYDFKTYRSSVFRRVNPTDVIILEGILLFHDPRVRKLMNMKIFVCTDADVRLARRIKRDTVENGRDIGTVLDQYSKFVKPAFDDFILPTKKYADIIIPRGGDNHVAIDLIVQHICTKLGQHDLCKIYPNLYVIHSTFQIRGMHTLIRDSQTTKHDFVFYSDRLIRLVVEHGLGHLPFTEKQVITPTGCVYSGVDFCKRLCGVSVIRSGESMENALRACCKGIKIGKILIHREGDNGQQLVYEKLPNDISERHVLLLDPILGTGNSAVEAINLLISKGVPEGNIIFLNLISAPQGVHVVCKKFPRIKIVTSEIDNGLNEEFRVIPGMGEFGDRYFGTDDD</sequence>
<gene>
    <name type="primary">UKL4</name>
    <name type="synonym">UPT1</name>
    <name type="ordered locus">At4g26510</name>
    <name type="ORF">M3E9.60</name>
</gene>
<name>UKL4_ARATH</name>